<protein>
    <recommendedName>
        <fullName>Putative tail protein</fullName>
    </recommendedName>
    <alternativeName>
        <fullName evidence="3">Putative uncharacterized protein orf50</fullName>
    </alternativeName>
</protein>
<sequence>MAQDKYIVALQIADKDLAKKLTIEEATLLGSLAEGGHTISNDLAEIIQGGKKDYSRNSVEEEIKLTLDVVPGDKGQLALKESVKQFKQLRVWIWETKKRDGKHHGVFAYVVIEEHEWSFDDEDNKIEITAKVKFNSADGTINDLPKEWLNPSALAPVVEFEDMNAYEDSYENRTKKTTAGSSDLSM</sequence>
<accession>A9CRB8</accession>
<dbReference type="EMBL" id="AB370268">
    <property type="protein sequence ID" value="BAF95143.1"/>
    <property type="molecule type" value="Genomic_DNA"/>
</dbReference>
<dbReference type="RefSeq" id="YP_001604141.1">
    <property type="nucleotide sequence ID" value="NC_010147.1"/>
</dbReference>
<dbReference type="SMR" id="A9CRB8"/>
<dbReference type="GeneID" id="5797081"/>
<dbReference type="KEGG" id="vg:5797081"/>
<dbReference type="OrthoDB" id="8888at10239"/>
<dbReference type="Proteomes" id="UP000001178">
    <property type="component" value="Segment"/>
</dbReference>
<organism>
    <name type="scientific">Staphylococcus phage phiMR11</name>
    <dbReference type="NCBI Taxonomy" id="379501"/>
    <lineage>
        <taxon>Viruses</taxon>
        <taxon>Duplodnaviria</taxon>
        <taxon>Heunggongvirae</taxon>
        <taxon>Uroviricota</taxon>
        <taxon>Caudoviricetes</taxon>
        <taxon>Azeredovirinae</taxon>
        <taxon>Phietavirus</taxon>
    </lineage>
</organism>
<feature type="initiator methionine" description="Removed" evidence="1">
    <location>
        <position position="1"/>
    </location>
</feature>
<feature type="chain" id="PRO_0000383665" description="Putative tail protein">
    <location>
        <begin position="2"/>
        <end position="186"/>
    </location>
</feature>
<organismHost>
    <name type="scientific">Staphylococcus aureus</name>
    <dbReference type="NCBI Taxonomy" id="1280"/>
</organismHost>
<proteinExistence type="evidence at protein level"/>
<name>TAIL_BPMR1</name>
<gene>
    <name evidence="3" type="primary">orf50</name>
</gene>
<reference evidence="2 3" key="1">
    <citation type="submission" date="2007-12" db="EMBL/GenBank/DDBJ databases">
        <authorList>
            <person name="Matsuzaki S."/>
            <person name="Hoshiba H."/>
        </authorList>
    </citation>
    <scope>NUCLEOTIDE SEQUENCE [GENOMIC DNA]</scope>
</reference>
<reference evidence="2 3" key="2">
    <citation type="submission" date="2009-06" db="UniProtKB">
        <authorList>
            <person name="Hoshiba H."/>
            <person name="Uchiyama J."/>
            <person name="Ujihara T."/>
            <person name="Wakiguchi H."/>
            <person name="Matsuzaki S."/>
        </authorList>
    </citation>
    <scope>PROTEIN SEQUENCE OF 2-21</scope>
</reference>
<keyword id="KW-0903">Direct protein sequencing</keyword>
<keyword id="KW-1185">Reference proteome</keyword>
<evidence type="ECO:0000269" key="1">
    <source ref="2"/>
</evidence>
<evidence type="ECO:0000305" key="2"/>
<evidence type="ECO:0000312" key="3">
    <source>
        <dbReference type="EMBL" id="BAF95143.1"/>
    </source>
</evidence>